<keyword id="KW-0963">Cytoplasm</keyword>
<keyword id="KW-0251">Elongation factor</keyword>
<keyword id="KW-0342">GTP-binding</keyword>
<keyword id="KW-0378">Hydrolase</keyword>
<keyword id="KW-0460">Magnesium</keyword>
<keyword id="KW-0479">Metal-binding</keyword>
<keyword id="KW-0547">Nucleotide-binding</keyword>
<keyword id="KW-0648">Protein biosynthesis</keyword>
<keyword id="KW-1185">Reference proteome</keyword>
<accession>Q8D240</accession>
<proteinExistence type="inferred from homology"/>
<gene>
    <name evidence="2" type="primary">tuf</name>
    <name type="synonym">tufA</name>
    <name type="ordered locus">WIGBR5150</name>
</gene>
<protein>
    <recommendedName>
        <fullName evidence="2">Elongation factor Tu</fullName>
        <shortName evidence="2">EF-Tu</shortName>
        <ecNumber evidence="2">3.6.5.3</ecNumber>
    </recommendedName>
</protein>
<feature type="chain" id="PRO_0000091436" description="Elongation factor Tu">
    <location>
        <begin position="1"/>
        <end position="394"/>
    </location>
</feature>
<feature type="domain" description="tr-type G">
    <location>
        <begin position="10"/>
        <end position="204"/>
    </location>
</feature>
<feature type="region of interest" description="G1" evidence="1">
    <location>
        <begin position="19"/>
        <end position="26"/>
    </location>
</feature>
<feature type="region of interest" description="G2" evidence="1">
    <location>
        <begin position="60"/>
        <end position="64"/>
    </location>
</feature>
<feature type="region of interest" description="G3" evidence="1">
    <location>
        <begin position="81"/>
        <end position="84"/>
    </location>
</feature>
<feature type="region of interest" description="G4" evidence="1">
    <location>
        <begin position="136"/>
        <end position="139"/>
    </location>
</feature>
<feature type="region of interest" description="G5" evidence="1">
    <location>
        <begin position="174"/>
        <end position="176"/>
    </location>
</feature>
<feature type="binding site" evidence="2">
    <location>
        <begin position="19"/>
        <end position="26"/>
    </location>
    <ligand>
        <name>GTP</name>
        <dbReference type="ChEBI" id="CHEBI:37565"/>
    </ligand>
</feature>
<feature type="binding site" evidence="2">
    <location>
        <position position="26"/>
    </location>
    <ligand>
        <name>Mg(2+)</name>
        <dbReference type="ChEBI" id="CHEBI:18420"/>
    </ligand>
</feature>
<feature type="binding site" evidence="2">
    <location>
        <begin position="81"/>
        <end position="85"/>
    </location>
    <ligand>
        <name>GTP</name>
        <dbReference type="ChEBI" id="CHEBI:37565"/>
    </ligand>
</feature>
<feature type="binding site" evidence="2">
    <location>
        <begin position="136"/>
        <end position="139"/>
    </location>
    <ligand>
        <name>GTP</name>
        <dbReference type="ChEBI" id="CHEBI:37565"/>
    </ligand>
</feature>
<name>EFTU_WIGBR</name>
<organism>
    <name type="scientific">Wigglesworthia glossinidia brevipalpis</name>
    <dbReference type="NCBI Taxonomy" id="36870"/>
    <lineage>
        <taxon>Bacteria</taxon>
        <taxon>Pseudomonadati</taxon>
        <taxon>Pseudomonadota</taxon>
        <taxon>Gammaproteobacteria</taxon>
        <taxon>Enterobacterales</taxon>
        <taxon>Erwiniaceae</taxon>
        <taxon>Wigglesworthia</taxon>
    </lineage>
</organism>
<comment type="function">
    <text evidence="2">GTP hydrolase that promotes the GTP-dependent binding of aminoacyl-tRNA to the A-site of ribosomes during protein biosynthesis.</text>
</comment>
<comment type="catalytic activity">
    <reaction evidence="2">
        <text>GTP + H2O = GDP + phosphate + H(+)</text>
        <dbReference type="Rhea" id="RHEA:19669"/>
        <dbReference type="ChEBI" id="CHEBI:15377"/>
        <dbReference type="ChEBI" id="CHEBI:15378"/>
        <dbReference type="ChEBI" id="CHEBI:37565"/>
        <dbReference type="ChEBI" id="CHEBI:43474"/>
        <dbReference type="ChEBI" id="CHEBI:58189"/>
        <dbReference type="EC" id="3.6.5.3"/>
    </reaction>
    <physiologicalReaction direction="left-to-right" evidence="2">
        <dbReference type="Rhea" id="RHEA:19670"/>
    </physiologicalReaction>
</comment>
<comment type="subunit">
    <text evidence="2">Monomer.</text>
</comment>
<comment type="subcellular location">
    <subcellularLocation>
        <location evidence="2">Cytoplasm</location>
    </subcellularLocation>
</comment>
<comment type="similarity">
    <text evidence="2">Belongs to the TRAFAC class translation factor GTPase superfamily. Classic translation factor GTPase family. EF-Tu/EF-1A subfamily.</text>
</comment>
<sequence>MSKEKFQRIKPHINVGTIGHVDHGKTTLTAAITNVLAKKYGGIPKAFDQIDNAPEEKARGITINTSHVEYDTKIRHYAHVDCPGHADYVKNMITGAAQMDGAILVVAATDGPMPQTREHILLGRQVGVPYIVVFMNKCDMVDDEELLELVEIEIRELLSQYDFPGDEIPIIRGSALKALEKDPIWIQKIIDLSEHLDNYIPEPKRIIDQPFLLPIEDVFSISGRGTVVTGRIERGTVKVGEEIEIIGIKNTVKTTCTGVEMFRKLLDEGRAGENVGILLRGTKREDVERGQVLAKPGSIKPHTQFESEVYVLKKEEGGRHTPFFNGYKPQFYFRTTDVTGSVELQKGTEMVMPGDNVKMLVKLISPIAMDDGLRFAIREGGKTVGAGIVSKIIV</sequence>
<evidence type="ECO:0000250" key="1"/>
<evidence type="ECO:0000255" key="2">
    <source>
        <dbReference type="HAMAP-Rule" id="MF_00118"/>
    </source>
</evidence>
<reference key="1">
    <citation type="journal article" date="2002" name="Nat. Genet.">
        <title>Genome sequence of the endocellular obligate symbiont of tsetse flies, Wigglesworthia glossinidia.</title>
        <authorList>
            <person name="Akman L."/>
            <person name="Yamashita A."/>
            <person name="Watanabe H."/>
            <person name="Oshima K."/>
            <person name="Shiba T."/>
            <person name="Hattori M."/>
            <person name="Aksoy S."/>
        </authorList>
    </citation>
    <scope>NUCLEOTIDE SEQUENCE [LARGE SCALE GENOMIC DNA]</scope>
</reference>
<dbReference type="EC" id="3.6.5.3" evidence="2"/>
<dbReference type="EMBL" id="BA000021">
    <property type="protein sequence ID" value="BAC24661.1"/>
    <property type="molecule type" value="Genomic_DNA"/>
</dbReference>
<dbReference type="SMR" id="Q8D240"/>
<dbReference type="STRING" id="36870.gene:10369023"/>
<dbReference type="KEGG" id="wbr:tufA"/>
<dbReference type="eggNOG" id="COG0050">
    <property type="taxonomic scope" value="Bacteria"/>
</dbReference>
<dbReference type="HOGENOM" id="CLU_007265_0_0_6"/>
<dbReference type="OrthoDB" id="9803139at2"/>
<dbReference type="Proteomes" id="UP000000562">
    <property type="component" value="Chromosome"/>
</dbReference>
<dbReference type="GO" id="GO:0005829">
    <property type="term" value="C:cytosol"/>
    <property type="evidence" value="ECO:0007669"/>
    <property type="project" value="TreeGrafter"/>
</dbReference>
<dbReference type="GO" id="GO:0005525">
    <property type="term" value="F:GTP binding"/>
    <property type="evidence" value="ECO:0007669"/>
    <property type="project" value="UniProtKB-UniRule"/>
</dbReference>
<dbReference type="GO" id="GO:0003924">
    <property type="term" value="F:GTPase activity"/>
    <property type="evidence" value="ECO:0007669"/>
    <property type="project" value="InterPro"/>
</dbReference>
<dbReference type="GO" id="GO:0097216">
    <property type="term" value="F:guanosine tetraphosphate binding"/>
    <property type="evidence" value="ECO:0007669"/>
    <property type="project" value="UniProtKB-ARBA"/>
</dbReference>
<dbReference type="GO" id="GO:0003746">
    <property type="term" value="F:translation elongation factor activity"/>
    <property type="evidence" value="ECO:0007669"/>
    <property type="project" value="UniProtKB-UniRule"/>
</dbReference>
<dbReference type="CDD" id="cd01884">
    <property type="entry name" value="EF_Tu"/>
    <property type="match status" value="1"/>
</dbReference>
<dbReference type="CDD" id="cd03697">
    <property type="entry name" value="EFTU_II"/>
    <property type="match status" value="1"/>
</dbReference>
<dbReference type="CDD" id="cd03707">
    <property type="entry name" value="EFTU_III"/>
    <property type="match status" value="1"/>
</dbReference>
<dbReference type="FunFam" id="2.40.30.10:FF:000001">
    <property type="entry name" value="Elongation factor Tu"/>
    <property type="match status" value="1"/>
</dbReference>
<dbReference type="FunFam" id="3.40.50.300:FF:000003">
    <property type="entry name" value="Elongation factor Tu"/>
    <property type="match status" value="1"/>
</dbReference>
<dbReference type="Gene3D" id="3.40.50.300">
    <property type="entry name" value="P-loop containing nucleotide triphosphate hydrolases"/>
    <property type="match status" value="1"/>
</dbReference>
<dbReference type="Gene3D" id="2.40.30.10">
    <property type="entry name" value="Translation factors"/>
    <property type="match status" value="2"/>
</dbReference>
<dbReference type="HAMAP" id="MF_00118_B">
    <property type="entry name" value="EF_Tu_B"/>
    <property type="match status" value="1"/>
</dbReference>
<dbReference type="InterPro" id="IPR041709">
    <property type="entry name" value="EF-Tu_GTP-bd"/>
</dbReference>
<dbReference type="InterPro" id="IPR050055">
    <property type="entry name" value="EF-Tu_GTPase"/>
</dbReference>
<dbReference type="InterPro" id="IPR004161">
    <property type="entry name" value="EFTu-like_2"/>
</dbReference>
<dbReference type="InterPro" id="IPR033720">
    <property type="entry name" value="EFTU_2"/>
</dbReference>
<dbReference type="InterPro" id="IPR031157">
    <property type="entry name" value="G_TR_CS"/>
</dbReference>
<dbReference type="InterPro" id="IPR027417">
    <property type="entry name" value="P-loop_NTPase"/>
</dbReference>
<dbReference type="InterPro" id="IPR005225">
    <property type="entry name" value="Small_GTP-bd"/>
</dbReference>
<dbReference type="InterPro" id="IPR000795">
    <property type="entry name" value="T_Tr_GTP-bd_dom"/>
</dbReference>
<dbReference type="InterPro" id="IPR009000">
    <property type="entry name" value="Transl_B-barrel_sf"/>
</dbReference>
<dbReference type="InterPro" id="IPR009001">
    <property type="entry name" value="Transl_elong_EF1A/Init_IF2_C"/>
</dbReference>
<dbReference type="InterPro" id="IPR004541">
    <property type="entry name" value="Transl_elong_EFTu/EF1A_bac/org"/>
</dbReference>
<dbReference type="InterPro" id="IPR004160">
    <property type="entry name" value="Transl_elong_EFTu/EF1A_C"/>
</dbReference>
<dbReference type="NCBIfam" id="TIGR00485">
    <property type="entry name" value="EF-Tu"/>
    <property type="match status" value="1"/>
</dbReference>
<dbReference type="NCBIfam" id="NF000766">
    <property type="entry name" value="PRK00049.1"/>
    <property type="match status" value="1"/>
</dbReference>
<dbReference type="NCBIfam" id="NF009372">
    <property type="entry name" value="PRK12735.1"/>
    <property type="match status" value="1"/>
</dbReference>
<dbReference type="NCBIfam" id="NF009373">
    <property type="entry name" value="PRK12736.1"/>
    <property type="match status" value="1"/>
</dbReference>
<dbReference type="NCBIfam" id="TIGR00231">
    <property type="entry name" value="small_GTP"/>
    <property type="match status" value="1"/>
</dbReference>
<dbReference type="PANTHER" id="PTHR43721:SF22">
    <property type="entry name" value="ELONGATION FACTOR TU, MITOCHONDRIAL"/>
    <property type="match status" value="1"/>
</dbReference>
<dbReference type="PANTHER" id="PTHR43721">
    <property type="entry name" value="ELONGATION FACTOR TU-RELATED"/>
    <property type="match status" value="1"/>
</dbReference>
<dbReference type="Pfam" id="PF00009">
    <property type="entry name" value="GTP_EFTU"/>
    <property type="match status" value="1"/>
</dbReference>
<dbReference type="Pfam" id="PF03144">
    <property type="entry name" value="GTP_EFTU_D2"/>
    <property type="match status" value="1"/>
</dbReference>
<dbReference type="Pfam" id="PF03143">
    <property type="entry name" value="GTP_EFTU_D3"/>
    <property type="match status" value="1"/>
</dbReference>
<dbReference type="PRINTS" id="PR00315">
    <property type="entry name" value="ELONGATNFCT"/>
</dbReference>
<dbReference type="SUPFAM" id="SSF50465">
    <property type="entry name" value="EF-Tu/eEF-1alpha/eIF2-gamma C-terminal domain"/>
    <property type="match status" value="1"/>
</dbReference>
<dbReference type="SUPFAM" id="SSF52540">
    <property type="entry name" value="P-loop containing nucleoside triphosphate hydrolases"/>
    <property type="match status" value="1"/>
</dbReference>
<dbReference type="SUPFAM" id="SSF50447">
    <property type="entry name" value="Translation proteins"/>
    <property type="match status" value="1"/>
</dbReference>
<dbReference type="PROSITE" id="PS00301">
    <property type="entry name" value="G_TR_1"/>
    <property type="match status" value="1"/>
</dbReference>
<dbReference type="PROSITE" id="PS51722">
    <property type="entry name" value="G_TR_2"/>
    <property type="match status" value="1"/>
</dbReference>